<feature type="chain" id="PRO_0000290834" description="Small ribosomal subunit protein uS8">
    <location>
        <begin position="1"/>
        <end position="131"/>
    </location>
</feature>
<accession>Q2N9C5</accession>
<evidence type="ECO:0000255" key="1">
    <source>
        <dbReference type="HAMAP-Rule" id="MF_01302"/>
    </source>
</evidence>
<evidence type="ECO:0000305" key="2"/>
<sequence length="131" mass="14278">MAMTDPLGDMLTRIRNGQQAKKDSVLSPASKLRANVLEVLQREGYIRGYSEDASGKHAALRIELKYFEGEPAIKHVARVSKPGRRIYSGSKELPTVRNGLGITIVSTPKGVLSDNEARTQNVGGEVLAEVF</sequence>
<proteinExistence type="inferred from homology"/>
<name>RS8_ERYLH</name>
<gene>
    <name evidence="1" type="primary">rpsH</name>
    <name type="ordered locus">ELI_08120</name>
</gene>
<comment type="function">
    <text evidence="1">One of the primary rRNA binding proteins, it binds directly to 16S rRNA central domain where it helps coordinate assembly of the platform of the 30S subunit.</text>
</comment>
<comment type="subunit">
    <text evidence="1">Part of the 30S ribosomal subunit. Contacts proteins S5 and S12.</text>
</comment>
<comment type="similarity">
    <text evidence="1">Belongs to the universal ribosomal protein uS8 family.</text>
</comment>
<organism>
    <name type="scientific">Erythrobacter litoralis (strain HTCC2594)</name>
    <dbReference type="NCBI Taxonomy" id="314225"/>
    <lineage>
        <taxon>Bacteria</taxon>
        <taxon>Pseudomonadati</taxon>
        <taxon>Pseudomonadota</taxon>
        <taxon>Alphaproteobacteria</taxon>
        <taxon>Sphingomonadales</taxon>
        <taxon>Erythrobacteraceae</taxon>
        <taxon>Erythrobacter/Porphyrobacter group</taxon>
        <taxon>Erythrobacter</taxon>
    </lineage>
</organism>
<reference key="1">
    <citation type="journal article" date="2009" name="J. Bacteriol.">
        <title>Complete genome sequence of Erythrobacter litoralis HTCC2594.</title>
        <authorList>
            <person name="Oh H.M."/>
            <person name="Giovannoni S.J."/>
            <person name="Ferriera S."/>
            <person name="Johnson J."/>
            <person name="Cho J.C."/>
        </authorList>
    </citation>
    <scope>NUCLEOTIDE SEQUENCE [LARGE SCALE GENOMIC DNA]</scope>
    <source>
        <strain>HTCC2594</strain>
    </source>
</reference>
<protein>
    <recommendedName>
        <fullName evidence="1">Small ribosomal subunit protein uS8</fullName>
    </recommendedName>
    <alternativeName>
        <fullName evidence="2">30S ribosomal protein S8</fullName>
    </alternativeName>
</protein>
<keyword id="KW-1185">Reference proteome</keyword>
<keyword id="KW-0687">Ribonucleoprotein</keyword>
<keyword id="KW-0689">Ribosomal protein</keyword>
<keyword id="KW-0694">RNA-binding</keyword>
<keyword id="KW-0699">rRNA-binding</keyword>
<dbReference type="EMBL" id="CP000157">
    <property type="protein sequence ID" value="ABC63716.1"/>
    <property type="molecule type" value="Genomic_DNA"/>
</dbReference>
<dbReference type="RefSeq" id="WP_011414548.1">
    <property type="nucleotide sequence ID" value="NC_007722.1"/>
</dbReference>
<dbReference type="SMR" id="Q2N9C5"/>
<dbReference type="STRING" id="314225.ELI_08120"/>
<dbReference type="KEGG" id="eli:ELI_08120"/>
<dbReference type="eggNOG" id="COG0096">
    <property type="taxonomic scope" value="Bacteria"/>
</dbReference>
<dbReference type="HOGENOM" id="CLU_098428_0_0_5"/>
<dbReference type="OrthoDB" id="9802617at2"/>
<dbReference type="Proteomes" id="UP000008808">
    <property type="component" value="Chromosome"/>
</dbReference>
<dbReference type="GO" id="GO:1990904">
    <property type="term" value="C:ribonucleoprotein complex"/>
    <property type="evidence" value="ECO:0007669"/>
    <property type="project" value="UniProtKB-KW"/>
</dbReference>
<dbReference type="GO" id="GO:0005840">
    <property type="term" value="C:ribosome"/>
    <property type="evidence" value="ECO:0007669"/>
    <property type="project" value="UniProtKB-KW"/>
</dbReference>
<dbReference type="GO" id="GO:0019843">
    <property type="term" value="F:rRNA binding"/>
    <property type="evidence" value="ECO:0007669"/>
    <property type="project" value="UniProtKB-UniRule"/>
</dbReference>
<dbReference type="GO" id="GO:0003735">
    <property type="term" value="F:structural constituent of ribosome"/>
    <property type="evidence" value="ECO:0007669"/>
    <property type="project" value="InterPro"/>
</dbReference>
<dbReference type="GO" id="GO:0006412">
    <property type="term" value="P:translation"/>
    <property type="evidence" value="ECO:0007669"/>
    <property type="project" value="UniProtKB-UniRule"/>
</dbReference>
<dbReference type="FunFam" id="3.30.1370.30:FF:000002">
    <property type="entry name" value="30S ribosomal protein S8"/>
    <property type="match status" value="1"/>
</dbReference>
<dbReference type="FunFam" id="3.30.1490.10:FF:000001">
    <property type="entry name" value="30S ribosomal protein S8"/>
    <property type="match status" value="1"/>
</dbReference>
<dbReference type="Gene3D" id="3.30.1370.30">
    <property type="match status" value="1"/>
</dbReference>
<dbReference type="Gene3D" id="3.30.1490.10">
    <property type="match status" value="1"/>
</dbReference>
<dbReference type="HAMAP" id="MF_01302_B">
    <property type="entry name" value="Ribosomal_uS8_B"/>
    <property type="match status" value="1"/>
</dbReference>
<dbReference type="InterPro" id="IPR000630">
    <property type="entry name" value="Ribosomal_uS8"/>
</dbReference>
<dbReference type="InterPro" id="IPR047863">
    <property type="entry name" value="Ribosomal_uS8_CS"/>
</dbReference>
<dbReference type="InterPro" id="IPR035987">
    <property type="entry name" value="Ribosomal_uS8_sf"/>
</dbReference>
<dbReference type="NCBIfam" id="NF001109">
    <property type="entry name" value="PRK00136.1"/>
    <property type="match status" value="1"/>
</dbReference>
<dbReference type="PANTHER" id="PTHR11758">
    <property type="entry name" value="40S RIBOSOMAL PROTEIN S15A"/>
    <property type="match status" value="1"/>
</dbReference>
<dbReference type="Pfam" id="PF00410">
    <property type="entry name" value="Ribosomal_S8"/>
    <property type="match status" value="1"/>
</dbReference>
<dbReference type="SUPFAM" id="SSF56047">
    <property type="entry name" value="Ribosomal protein S8"/>
    <property type="match status" value="1"/>
</dbReference>
<dbReference type="PROSITE" id="PS00053">
    <property type="entry name" value="RIBOSOMAL_S8"/>
    <property type="match status" value="1"/>
</dbReference>